<name>PURA_LEUCK</name>
<organism>
    <name type="scientific">Leuconostoc citreum (strain KM20)</name>
    <dbReference type="NCBI Taxonomy" id="349519"/>
    <lineage>
        <taxon>Bacteria</taxon>
        <taxon>Bacillati</taxon>
        <taxon>Bacillota</taxon>
        <taxon>Bacilli</taxon>
        <taxon>Lactobacillales</taxon>
        <taxon>Lactobacillaceae</taxon>
        <taxon>Leuconostoc</taxon>
    </lineage>
</organism>
<proteinExistence type="inferred from homology"/>
<comment type="function">
    <text evidence="1">Plays an important role in the de novo pathway of purine nucleotide biosynthesis. Catalyzes the first committed step in the biosynthesis of AMP from IMP.</text>
</comment>
<comment type="catalytic activity">
    <reaction evidence="1">
        <text>IMP + L-aspartate + GTP = N(6)-(1,2-dicarboxyethyl)-AMP + GDP + phosphate + 2 H(+)</text>
        <dbReference type="Rhea" id="RHEA:15753"/>
        <dbReference type="ChEBI" id="CHEBI:15378"/>
        <dbReference type="ChEBI" id="CHEBI:29991"/>
        <dbReference type="ChEBI" id="CHEBI:37565"/>
        <dbReference type="ChEBI" id="CHEBI:43474"/>
        <dbReference type="ChEBI" id="CHEBI:57567"/>
        <dbReference type="ChEBI" id="CHEBI:58053"/>
        <dbReference type="ChEBI" id="CHEBI:58189"/>
        <dbReference type="EC" id="6.3.4.4"/>
    </reaction>
</comment>
<comment type="cofactor">
    <cofactor evidence="1">
        <name>Mg(2+)</name>
        <dbReference type="ChEBI" id="CHEBI:18420"/>
    </cofactor>
    <text evidence="1">Binds 1 Mg(2+) ion per subunit.</text>
</comment>
<comment type="pathway">
    <text evidence="1">Purine metabolism; AMP biosynthesis via de novo pathway; AMP from IMP: step 1/2.</text>
</comment>
<comment type="subunit">
    <text evidence="1">Homodimer.</text>
</comment>
<comment type="subcellular location">
    <subcellularLocation>
        <location evidence="1">Cytoplasm</location>
    </subcellularLocation>
</comment>
<comment type="similarity">
    <text evidence="1">Belongs to the adenylosuccinate synthetase family.</text>
</comment>
<protein>
    <recommendedName>
        <fullName evidence="1">Adenylosuccinate synthetase</fullName>
        <shortName evidence="1">AMPSase</shortName>
        <shortName evidence="1">AdSS</shortName>
        <ecNumber evidence="1">6.3.4.4</ecNumber>
    </recommendedName>
    <alternativeName>
        <fullName evidence="1">IMP--aspartate ligase</fullName>
    </alternativeName>
</protein>
<reference key="1">
    <citation type="journal article" date="2008" name="J. Bacteriol.">
        <title>Complete genome sequence of Leuconostoc citreum KM20.</title>
        <authorList>
            <person name="Kim J.F."/>
            <person name="Jeong H."/>
            <person name="Lee J.-S."/>
            <person name="Choi S.-H."/>
            <person name="Ha M."/>
            <person name="Hur C.-G."/>
            <person name="Kim J.-S."/>
            <person name="Lee S."/>
            <person name="Park H.-S."/>
            <person name="Park Y.-H."/>
            <person name="Oh T.K."/>
        </authorList>
    </citation>
    <scope>NUCLEOTIDE SEQUENCE [LARGE SCALE GENOMIC DNA]</scope>
    <source>
        <strain>KM20</strain>
    </source>
</reference>
<keyword id="KW-0963">Cytoplasm</keyword>
<keyword id="KW-0342">GTP-binding</keyword>
<keyword id="KW-0436">Ligase</keyword>
<keyword id="KW-0460">Magnesium</keyword>
<keyword id="KW-0479">Metal-binding</keyword>
<keyword id="KW-0547">Nucleotide-binding</keyword>
<keyword id="KW-0658">Purine biosynthesis</keyword>
<keyword id="KW-1185">Reference proteome</keyword>
<evidence type="ECO:0000255" key="1">
    <source>
        <dbReference type="HAMAP-Rule" id="MF_00011"/>
    </source>
</evidence>
<dbReference type="EC" id="6.3.4.4" evidence="1"/>
<dbReference type="EMBL" id="DQ489736">
    <property type="protein sequence ID" value="ACA83104.1"/>
    <property type="molecule type" value="Genomic_DNA"/>
</dbReference>
<dbReference type="RefSeq" id="WP_012305372.1">
    <property type="nucleotide sequence ID" value="NC_010471.1"/>
</dbReference>
<dbReference type="SMR" id="B1N002"/>
<dbReference type="STRING" id="349519.LCK_01279"/>
<dbReference type="KEGG" id="lci:LCK_01279"/>
<dbReference type="eggNOG" id="COG0104">
    <property type="taxonomic scope" value="Bacteria"/>
</dbReference>
<dbReference type="HOGENOM" id="CLU_029848_0_0_9"/>
<dbReference type="OrthoDB" id="9807553at2"/>
<dbReference type="UniPathway" id="UPA00075">
    <property type="reaction ID" value="UER00335"/>
</dbReference>
<dbReference type="Proteomes" id="UP000002166">
    <property type="component" value="Chromosome"/>
</dbReference>
<dbReference type="GO" id="GO:0005737">
    <property type="term" value="C:cytoplasm"/>
    <property type="evidence" value="ECO:0007669"/>
    <property type="project" value="UniProtKB-SubCell"/>
</dbReference>
<dbReference type="GO" id="GO:0004019">
    <property type="term" value="F:adenylosuccinate synthase activity"/>
    <property type="evidence" value="ECO:0007669"/>
    <property type="project" value="UniProtKB-UniRule"/>
</dbReference>
<dbReference type="GO" id="GO:0005525">
    <property type="term" value="F:GTP binding"/>
    <property type="evidence" value="ECO:0007669"/>
    <property type="project" value="UniProtKB-UniRule"/>
</dbReference>
<dbReference type="GO" id="GO:0000287">
    <property type="term" value="F:magnesium ion binding"/>
    <property type="evidence" value="ECO:0007669"/>
    <property type="project" value="UniProtKB-UniRule"/>
</dbReference>
<dbReference type="GO" id="GO:0044208">
    <property type="term" value="P:'de novo' AMP biosynthetic process"/>
    <property type="evidence" value="ECO:0007669"/>
    <property type="project" value="UniProtKB-UniRule"/>
</dbReference>
<dbReference type="GO" id="GO:0046040">
    <property type="term" value="P:IMP metabolic process"/>
    <property type="evidence" value="ECO:0007669"/>
    <property type="project" value="TreeGrafter"/>
</dbReference>
<dbReference type="CDD" id="cd03108">
    <property type="entry name" value="AdSS"/>
    <property type="match status" value="1"/>
</dbReference>
<dbReference type="FunFam" id="1.10.300.10:FF:000001">
    <property type="entry name" value="Adenylosuccinate synthetase"/>
    <property type="match status" value="1"/>
</dbReference>
<dbReference type="FunFam" id="3.90.170.10:FF:000001">
    <property type="entry name" value="Adenylosuccinate synthetase"/>
    <property type="match status" value="1"/>
</dbReference>
<dbReference type="Gene3D" id="3.40.440.10">
    <property type="entry name" value="Adenylosuccinate Synthetase, subunit A, domain 1"/>
    <property type="match status" value="1"/>
</dbReference>
<dbReference type="Gene3D" id="1.10.300.10">
    <property type="entry name" value="Adenylosuccinate Synthetase, subunit A, domain 2"/>
    <property type="match status" value="1"/>
</dbReference>
<dbReference type="Gene3D" id="3.90.170.10">
    <property type="entry name" value="Adenylosuccinate Synthetase, subunit A, domain 3"/>
    <property type="match status" value="1"/>
</dbReference>
<dbReference type="HAMAP" id="MF_00011">
    <property type="entry name" value="Adenylosucc_synth"/>
    <property type="match status" value="1"/>
</dbReference>
<dbReference type="InterPro" id="IPR018220">
    <property type="entry name" value="Adenylosuccin_syn_GTP-bd"/>
</dbReference>
<dbReference type="InterPro" id="IPR033128">
    <property type="entry name" value="Adenylosuccin_syn_Lys_AS"/>
</dbReference>
<dbReference type="InterPro" id="IPR042109">
    <property type="entry name" value="Adenylosuccinate_synth_dom1"/>
</dbReference>
<dbReference type="InterPro" id="IPR042110">
    <property type="entry name" value="Adenylosuccinate_synth_dom2"/>
</dbReference>
<dbReference type="InterPro" id="IPR042111">
    <property type="entry name" value="Adenylosuccinate_synth_dom3"/>
</dbReference>
<dbReference type="InterPro" id="IPR001114">
    <property type="entry name" value="Adenylosuccinate_synthetase"/>
</dbReference>
<dbReference type="InterPro" id="IPR027417">
    <property type="entry name" value="P-loop_NTPase"/>
</dbReference>
<dbReference type="NCBIfam" id="NF002223">
    <property type="entry name" value="PRK01117.1"/>
    <property type="match status" value="1"/>
</dbReference>
<dbReference type="NCBIfam" id="TIGR00184">
    <property type="entry name" value="purA"/>
    <property type="match status" value="1"/>
</dbReference>
<dbReference type="PANTHER" id="PTHR11846">
    <property type="entry name" value="ADENYLOSUCCINATE SYNTHETASE"/>
    <property type="match status" value="1"/>
</dbReference>
<dbReference type="PANTHER" id="PTHR11846:SF0">
    <property type="entry name" value="ADENYLOSUCCINATE SYNTHETASE"/>
    <property type="match status" value="1"/>
</dbReference>
<dbReference type="Pfam" id="PF00709">
    <property type="entry name" value="Adenylsucc_synt"/>
    <property type="match status" value="1"/>
</dbReference>
<dbReference type="SMART" id="SM00788">
    <property type="entry name" value="Adenylsucc_synt"/>
    <property type="match status" value="1"/>
</dbReference>
<dbReference type="SUPFAM" id="SSF52540">
    <property type="entry name" value="P-loop containing nucleoside triphosphate hydrolases"/>
    <property type="match status" value="1"/>
</dbReference>
<dbReference type="PROSITE" id="PS01266">
    <property type="entry name" value="ADENYLOSUCCIN_SYN_1"/>
    <property type="match status" value="1"/>
</dbReference>
<dbReference type="PROSITE" id="PS00513">
    <property type="entry name" value="ADENYLOSUCCIN_SYN_2"/>
    <property type="match status" value="1"/>
</dbReference>
<accession>B1N002</accession>
<feature type="chain" id="PRO_1000089310" description="Adenylosuccinate synthetase">
    <location>
        <begin position="1"/>
        <end position="427"/>
    </location>
</feature>
<feature type="active site" description="Proton acceptor" evidence="1">
    <location>
        <position position="13"/>
    </location>
</feature>
<feature type="active site" description="Proton donor" evidence="1">
    <location>
        <position position="41"/>
    </location>
</feature>
<feature type="binding site" evidence="1">
    <location>
        <begin position="12"/>
        <end position="18"/>
    </location>
    <ligand>
        <name>GTP</name>
        <dbReference type="ChEBI" id="CHEBI:37565"/>
    </ligand>
</feature>
<feature type="binding site" description="in other chain" evidence="1">
    <location>
        <begin position="13"/>
        <end position="16"/>
    </location>
    <ligand>
        <name>IMP</name>
        <dbReference type="ChEBI" id="CHEBI:58053"/>
        <note>ligand shared between dimeric partners</note>
    </ligand>
</feature>
<feature type="binding site" evidence="1">
    <location>
        <position position="13"/>
    </location>
    <ligand>
        <name>Mg(2+)</name>
        <dbReference type="ChEBI" id="CHEBI:18420"/>
    </ligand>
</feature>
<feature type="binding site" description="in other chain" evidence="1">
    <location>
        <begin position="38"/>
        <end position="41"/>
    </location>
    <ligand>
        <name>IMP</name>
        <dbReference type="ChEBI" id="CHEBI:58053"/>
        <note>ligand shared between dimeric partners</note>
    </ligand>
</feature>
<feature type="binding site" evidence="1">
    <location>
        <begin position="40"/>
        <end position="42"/>
    </location>
    <ligand>
        <name>GTP</name>
        <dbReference type="ChEBI" id="CHEBI:37565"/>
    </ligand>
</feature>
<feature type="binding site" evidence="1">
    <location>
        <position position="40"/>
    </location>
    <ligand>
        <name>Mg(2+)</name>
        <dbReference type="ChEBI" id="CHEBI:18420"/>
    </ligand>
</feature>
<feature type="binding site" description="in other chain" evidence="1">
    <location>
        <position position="127"/>
    </location>
    <ligand>
        <name>IMP</name>
        <dbReference type="ChEBI" id="CHEBI:58053"/>
        <note>ligand shared between dimeric partners</note>
    </ligand>
</feature>
<feature type="binding site" evidence="1">
    <location>
        <position position="141"/>
    </location>
    <ligand>
        <name>IMP</name>
        <dbReference type="ChEBI" id="CHEBI:58053"/>
        <note>ligand shared between dimeric partners</note>
    </ligand>
</feature>
<feature type="binding site" description="in other chain" evidence="1">
    <location>
        <position position="222"/>
    </location>
    <ligand>
        <name>IMP</name>
        <dbReference type="ChEBI" id="CHEBI:58053"/>
        <note>ligand shared between dimeric partners</note>
    </ligand>
</feature>
<feature type="binding site" description="in other chain" evidence="1">
    <location>
        <position position="237"/>
    </location>
    <ligand>
        <name>IMP</name>
        <dbReference type="ChEBI" id="CHEBI:58053"/>
        <note>ligand shared between dimeric partners</note>
    </ligand>
</feature>
<feature type="binding site" evidence="1">
    <location>
        <begin position="297"/>
        <end position="303"/>
    </location>
    <ligand>
        <name>substrate</name>
    </ligand>
</feature>
<feature type="binding site" description="in other chain" evidence="1">
    <location>
        <position position="301"/>
    </location>
    <ligand>
        <name>IMP</name>
        <dbReference type="ChEBI" id="CHEBI:58053"/>
        <note>ligand shared between dimeric partners</note>
    </ligand>
</feature>
<feature type="binding site" evidence="1">
    <location>
        <position position="303"/>
    </location>
    <ligand>
        <name>GTP</name>
        <dbReference type="ChEBI" id="CHEBI:37565"/>
    </ligand>
</feature>
<feature type="binding site" evidence="1">
    <location>
        <begin position="329"/>
        <end position="331"/>
    </location>
    <ligand>
        <name>GTP</name>
        <dbReference type="ChEBI" id="CHEBI:37565"/>
    </ligand>
</feature>
<feature type="binding site" evidence="1">
    <location>
        <begin position="411"/>
        <end position="413"/>
    </location>
    <ligand>
        <name>GTP</name>
        <dbReference type="ChEBI" id="CHEBI:37565"/>
    </ligand>
</feature>
<gene>
    <name evidence="1" type="primary">purA</name>
    <name type="ordered locus">LCK_01279</name>
</gene>
<sequence>MSGVIVVGSQWGDEGKGKIVDFFAEHADAVVRYQGGNNAGHTIWHGNTKFELSALPSGILTEGQLAVIGNGVVVNPEALLAEIAEVQSQGIAIDNLRISNRAHVIMPYHIALDKAAESSTNNRIGTTKKGIGPAYTDKISRVGIRVADLVDPDVFAKLLKEYLPFKNAQLTKLYNEEALNYDDIYETYVEYGRQLAPYVTDTSYLLGQMIANKKRVVFEGAQGIMLDVDHGTYPYVTSSNPTAGGVMNGAGVGPKQIQDVVGVIKAYTSRVGEGPFPTELHDDIADHIREVGHEYGVVTKRPRRIGWLDAVALRHAVQVSGLTKLAINSLDVLTGLKTLKIATSYTYKGEEIHHFPASDTWFEGLDVNFETLPGWDEDITGVQSFDELPANAQNYLKRISDLLSVDLLSFAVGPKPEETHLLSDVWQ</sequence>